<proteinExistence type="inferred from homology"/>
<accession>Q61MR2</accession>
<accession>A8X6E8</accession>
<comment type="subcellular location">
    <subcellularLocation>
        <location evidence="1">Nucleus</location>
    </subcellularLocation>
</comment>
<comment type="similarity">
    <text evidence="3">Belongs to the IWS1 family.</text>
</comment>
<sequence length="497" mass="56062">MSDHEGASPASSAPSSPLVPVSPRSDHNAPESPSGDVADLYKDDDSPLAPRSPASPRKSPENSPVGSPVKTTKVVISSDEDSDDEGPSSKKQRAVLSDSDASDTEATTKKSRITLDSDDSDQEGDKQQKRKDLFGDDSDDDDFDRPKKQNDDLDELVKGDLEEDRGEQQRPIYDSDDDDGPSDRRGGRNFEWDFDKMLAEKKAERKRKTRRGKDGGIDIINDDDGMVAKLVEKMKHAAKSDRNANVERKPAFQKIKMLPEVKAIMLRAGIVEVLIENGFMSALSEWLAPLPDKCLPALDIRITVLKLLHNPRFWKLDRSTLKQSGLGKAVMMLYKHPNETKENKAIANKLIGEWARPIYHLDTDYSTVSRQEREERDYSRMPEKRKKKLHSREEEPDEDEAPKRPRIRDAEGLGPTKSLDLKPGDKGYINRARVPKPSTKDYVIRPEWRVSGEFKGEKKASGSKRYDQTLRDFQERTRKSKANRLVKVSLEGRNMGI</sequence>
<feature type="chain" id="PRO_0000083351" description="IWS1-like protein">
    <location>
        <begin position="1"/>
        <end position="497"/>
    </location>
</feature>
<feature type="domain" description="TFIIS N-terminal" evidence="1">
    <location>
        <begin position="281"/>
        <end position="361"/>
    </location>
</feature>
<feature type="region of interest" description="Disordered" evidence="2">
    <location>
        <begin position="1"/>
        <end position="191"/>
    </location>
</feature>
<feature type="region of interest" description="Disordered" evidence="2">
    <location>
        <begin position="369"/>
        <end position="433"/>
    </location>
</feature>
<feature type="compositionally biased region" description="Low complexity" evidence="2">
    <location>
        <begin position="7"/>
        <end position="23"/>
    </location>
</feature>
<feature type="compositionally biased region" description="Low complexity" evidence="2">
    <location>
        <begin position="47"/>
        <end position="57"/>
    </location>
</feature>
<feature type="compositionally biased region" description="Basic and acidic residues" evidence="2">
    <location>
        <begin position="123"/>
        <end position="134"/>
    </location>
</feature>
<feature type="compositionally biased region" description="Basic and acidic residues" evidence="2">
    <location>
        <begin position="144"/>
        <end position="160"/>
    </location>
</feature>
<feature type="compositionally biased region" description="Basic and acidic residues" evidence="2">
    <location>
        <begin position="181"/>
        <end position="191"/>
    </location>
</feature>
<feature type="compositionally biased region" description="Basic and acidic residues" evidence="2">
    <location>
        <begin position="370"/>
        <end position="382"/>
    </location>
</feature>
<feature type="compositionally biased region" description="Basic and acidic residues" evidence="2">
    <location>
        <begin position="401"/>
        <end position="411"/>
    </location>
</feature>
<keyword id="KW-0539">Nucleus</keyword>
<keyword id="KW-1185">Reference proteome</keyword>
<organism>
    <name type="scientific">Caenorhabditis briggsae</name>
    <dbReference type="NCBI Taxonomy" id="6238"/>
    <lineage>
        <taxon>Eukaryota</taxon>
        <taxon>Metazoa</taxon>
        <taxon>Ecdysozoa</taxon>
        <taxon>Nematoda</taxon>
        <taxon>Chromadorea</taxon>
        <taxon>Rhabditida</taxon>
        <taxon>Rhabditina</taxon>
        <taxon>Rhabditomorpha</taxon>
        <taxon>Rhabditoidea</taxon>
        <taxon>Rhabditidae</taxon>
        <taxon>Peloderinae</taxon>
        <taxon>Caenorhabditis</taxon>
    </lineage>
</organism>
<dbReference type="EMBL" id="HE601100">
    <property type="protein sequence ID" value="CAP28209.2"/>
    <property type="molecule type" value="Genomic_DNA"/>
</dbReference>
<dbReference type="RefSeq" id="XP_045093749.1">
    <property type="nucleotide sequence ID" value="XM_045236041.1"/>
</dbReference>
<dbReference type="SMR" id="Q61MR2"/>
<dbReference type="FunCoup" id="Q61MR2">
    <property type="interactions" value="1602"/>
</dbReference>
<dbReference type="STRING" id="6238.Q61MR2"/>
<dbReference type="EnsemblMetazoa" id="CBG08373.1">
    <property type="protein sequence ID" value="CBG08373.1"/>
    <property type="gene ID" value="WBGene00030176"/>
</dbReference>
<dbReference type="GeneID" id="8576561"/>
<dbReference type="WormBase" id="CBG08373">
    <property type="protein sequence ID" value="CBP32781"/>
    <property type="gene ID" value="WBGene00030176"/>
</dbReference>
<dbReference type="eggNOG" id="KOG1793">
    <property type="taxonomic scope" value="Eukaryota"/>
</dbReference>
<dbReference type="HOGENOM" id="CLU_040584_1_0_1"/>
<dbReference type="InParanoid" id="Q61MR2"/>
<dbReference type="OMA" id="REMKEMW"/>
<dbReference type="Proteomes" id="UP000008549">
    <property type="component" value="Unassembled WGS sequence"/>
</dbReference>
<dbReference type="GO" id="GO:0005634">
    <property type="term" value="C:nucleus"/>
    <property type="evidence" value="ECO:0000318"/>
    <property type="project" value="GO_Central"/>
</dbReference>
<dbReference type="GO" id="GO:0016973">
    <property type="term" value="P:poly(A)+ mRNA export from nucleus"/>
    <property type="evidence" value="ECO:0000318"/>
    <property type="project" value="GO_Central"/>
</dbReference>
<dbReference type="FunFam" id="1.20.930.10:FF:000021">
    <property type="entry name" value="IWS1-like protein"/>
    <property type="match status" value="1"/>
</dbReference>
<dbReference type="Gene3D" id="1.20.930.10">
    <property type="entry name" value="Conserved domain common to transcription factors TFIIS, elongin A, CRSP70"/>
    <property type="match status" value="1"/>
</dbReference>
<dbReference type="InterPro" id="IPR051037">
    <property type="entry name" value="RNAPII_TF_IWS1"/>
</dbReference>
<dbReference type="InterPro" id="IPR035441">
    <property type="entry name" value="TFIIS/LEDGF_dom_sf"/>
</dbReference>
<dbReference type="InterPro" id="IPR017923">
    <property type="entry name" value="TFIIS_N"/>
</dbReference>
<dbReference type="PANTHER" id="PTHR46010">
    <property type="entry name" value="PROTEIN IWS1 HOMOLOG"/>
    <property type="match status" value="1"/>
</dbReference>
<dbReference type="PANTHER" id="PTHR46010:SF1">
    <property type="entry name" value="PROTEIN IWS1 HOMOLOG"/>
    <property type="match status" value="1"/>
</dbReference>
<dbReference type="Pfam" id="PF08711">
    <property type="entry name" value="Med26"/>
    <property type="match status" value="1"/>
</dbReference>
<dbReference type="PROSITE" id="PS51319">
    <property type="entry name" value="TFIIS_N"/>
    <property type="match status" value="1"/>
</dbReference>
<protein>
    <recommendedName>
        <fullName>IWS1-like protein</fullName>
    </recommendedName>
</protein>
<evidence type="ECO:0000255" key="1">
    <source>
        <dbReference type="PROSITE-ProRule" id="PRU00649"/>
    </source>
</evidence>
<evidence type="ECO:0000256" key="2">
    <source>
        <dbReference type="SAM" id="MobiDB-lite"/>
    </source>
</evidence>
<evidence type="ECO:0000305" key="3"/>
<evidence type="ECO:0000312" key="4">
    <source>
        <dbReference type="WormBase" id="CBG08373"/>
    </source>
</evidence>
<name>IWS1_CAEBR</name>
<reference key="1">
    <citation type="journal article" date="2003" name="PLoS Biol.">
        <title>The genome sequence of Caenorhabditis briggsae: a platform for comparative genomics.</title>
        <authorList>
            <person name="Stein L.D."/>
            <person name="Bao Z."/>
            <person name="Blasiar D."/>
            <person name="Blumenthal T."/>
            <person name="Brent M.R."/>
            <person name="Chen N."/>
            <person name="Chinwalla A."/>
            <person name="Clarke L."/>
            <person name="Clee C."/>
            <person name="Coghlan A."/>
            <person name="Coulson A."/>
            <person name="D'Eustachio P."/>
            <person name="Fitch D.H.A."/>
            <person name="Fulton L.A."/>
            <person name="Fulton R.E."/>
            <person name="Griffiths-Jones S."/>
            <person name="Harris T.W."/>
            <person name="Hillier L.W."/>
            <person name="Kamath R."/>
            <person name="Kuwabara P.E."/>
            <person name="Mardis E.R."/>
            <person name="Marra M.A."/>
            <person name="Miner T.L."/>
            <person name="Minx P."/>
            <person name="Mullikin J.C."/>
            <person name="Plumb R.W."/>
            <person name="Rogers J."/>
            <person name="Schein J.E."/>
            <person name="Sohrmann M."/>
            <person name="Spieth J."/>
            <person name="Stajich J.E."/>
            <person name="Wei C."/>
            <person name="Willey D."/>
            <person name="Wilson R.K."/>
            <person name="Durbin R.M."/>
            <person name="Waterston R.H."/>
        </authorList>
    </citation>
    <scope>NUCLEOTIDE SEQUENCE [LARGE SCALE GENOMIC DNA]</scope>
    <source>
        <strain>AF16</strain>
    </source>
</reference>
<gene>
    <name evidence="4" type="ORF">CBG08373</name>
</gene>